<proteinExistence type="inferred from homology"/>
<accession>B1KX81</accession>
<reference key="1">
    <citation type="journal article" date="2007" name="PLoS ONE">
        <title>Analysis of the neurotoxin complex genes in Clostridium botulinum A1-A4 and B1 strains: BoNT/A3, /Ba4 and /B1 clusters are located within plasmids.</title>
        <authorList>
            <person name="Smith T.J."/>
            <person name="Hill K.K."/>
            <person name="Foley B.T."/>
            <person name="Detter J.C."/>
            <person name="Munk A.C."/>
            <person name="Bruce D.C."/>
            <person name="Doggett N.A."/>
            <person name="Smith L.A."/>
            <person name="Marks J.D."/>
            <person name="Xie G."/>
            <person name="Brettin T.S."/>
        </authorList>
    </citation>
    <scope>NUCLEOTIDE SEQUENCE [LARGE SCALE GENOMIC DNA]</scope>
    <source>
        <strain>Loch Maree / Type A3</strain>
    </source>
</reference>
<keyword id="KW-0067">ATP-binding</keyword>
<keyword id="KW-0238">DNA-binding</keyword>
<keyword id="KW-0479">Metal-binding</keyword>
<keyword id="KW-0547">Nucleotide-binding</keyword>
<keyword id="KW-0678">Repressor</keyword>
<keyword id="KW-0804">Transcription</keyword>
<keyword id="KW-0805">Transcription regulation</keyword>
<keyword id="KW-0862">Zinc</keyword>
<keyword id="KW-0863">Zinc-finger</keyword>
<sequence>MKCPYCAYGESKVVDSRSTEDGSSIRRRRECLKCNRRYTTYEKIETTPILVIKKNMSREYFDRNKIVNGLMKACQKRPVSRKQIEQIADEVERHISNEMLTEVNTDKIGQIIMKNLKKIDEVSYVRFASVYRQFKDINTFMKEIKNLMDKN</sequence>
<evidence type="ECO:0000255" key="1">
    <source>
        <dbReference type="HAMAP-Rule" id="MF_00440"/>
    </source>
</evidence>
<name>NRDR_CLOBM</name>
<gene>
    <name evidence="1" type="primary">nrdR</name>
    <name type="ordered locus">CLK_1913</name>
</gene>
<organism>
    <name type="scientific">Clostridium botulinum (strain Loch Maree / Type A3)</name>
    <dbReference type="NCBI Taxonomy" id="498214"/>
    <lineage>
        <taxon>Bacteria</taxon>
        <taxon>Bacillati</taxon>
        <taxon>Bacillota</taxon>
        <taxon>Clostridia</taxon>
        <taxon>Eubacteriales</taxon>
        <taxon>Clostridiaceae</taxon>
        <taxon>Clostridium</taxon>
    </lineage>
</organism>
<dbReference type="EMBL" id="CP000962">
    <property type="protein sequence ID" value="ACA55670.1"/>
    <property type="molecule type" value="Genomic_DNA"/>
</dbReference>
<dbReference type="RefSeq" id="WP_012343625.1">
    <property type="nucleotide sequence ID" value="NC_010520.1"/>
</dbReference>
<dbReference type="SMR" id="B1KX81"/>
<dbReference type="KEGG" id="cbl:CLK_1913"/>
<dbReference type="HOGENOM" id="CLU_108412_0_0_9"/>
<dbReference type="GO" id="GO:0005524">
    <property type="term" value="F:ATP binding"/>
    <property type="evidence" value="ECO:0007669"/>
    <property type="project" value="UniProtKB-KW"/>
</dbReference>
<dbReference type="GO" id="GO:0003677">
    <property type="term" value="F:DNA binding"/>
    <property type="evidence" value="ECO:0007669"/>
    <property type="project" value="UniProtKB-KW"/>
</dbReference>
<dbReference type="GO" id="GO:0008270">
    <property type="term" value="F:zinc ion binding"/>
    <property type="evidence" value="ECO:0007669"/>
    <property type="project" value="UniProtKB-UniRule"/>
</dbReference>
<dbReference type="GO" id="GO:0045892">
    <property type="term" value="P:negative regulation of DNA-templated transcription"/>
    <property type="evidence" value="ECO:0007669"/>
    <property type="project" value="UniProtKB-UniRule"/>
</dbReference>
<dbReference type="HAMAP" id="MF_00440">
    <property type="entry name" value="NrdR"/>
    <property type="match status" value="1"/>
</dbReference>
<dbReference type="InterPro" id="IPR005144">
    <property type="entry name" value="ATP-cone_dom"/>
</dbReference>
<dbReference type="InterPro" id="IPR055173">
    <property type="entry name" value="NrdR-like_N"/>
</dbReference>
<dbReference type="InterPro" id="IPR003796">
    <property type="entry name" value="RNR_NrdR-like"/>
</dbReference>
<dbReference type="NCBIfam" id="TIGR00244">
    <property type="entry name" value="transcriptional regulator NrdR"/>
    <property type="match status" value="1"/>
</dbReference>
<dbReference type="PANTHER" id="PTHR30455">
    <property type="entry name" value="TRANSCRIPTIONAL REPRESSOR NRDR"/>
    <property type="match status" value="1"/>
</dbReference>
<dbReference type="PANTHER" id="PTHR30455:SF2">
    <property type="entry name" value="TRANSCRIPTIONAL REPRESSOR NRDR"/>
    <property type="match status" value="1"/>
</dbReference>
<dbReference type="Pfam" id="PF03477">
    <property type="entry name" value="ATP-cone"/>
    <property type="match status" value="1"/>
</dbReference>
<dbReference type="Pfam" id="PF22811">
    <property type="entry name" value="Zn_ribbon_NrdR"/>
    <property type="match status" value="1"/>
</dbReference>
<dbReference type="PROSITE" id="PS51161">
    <property type="entry name" value="ATP_CONE"/>
    <property type="match status" value="1"/>
</dbReference>
<comment type="function">
    <text evidence="1">Negatively regulates transcription of bacterial ribonucleotide reductase nrd genes and operons by binding to NrdR-boxes.</text>
</comment>
<comment type="cofactor">
    <cofactor evidence="1">
        <name>Zn(2+)</name>
        <dbReference type="ChEBI" id="CHEBI:29105"/>
    </cofactor>
    <text evidence="1">Binds 1 zinc ion.</text>
</comment>
<comment type="similarity">
    <text evidence="1">Belongs to the NrdR family.</text>
</comment>
<feature type="chain" id="PRO_1000124486" description="Transcriptional repressor NrdR">
    <location>
        <begin position="1"/>
        <end position="151"/>
    </location>
</feature>
<feature type="domain" description="ATP-cone" evidence="1">
    <location>
        <begin position="49"/>
        <end position="139"/>
    </location>
</feature>
<feature type="zinc finger region" evidence="1">
    <location>
        <begin position="3"/>
        <end position="34"/>
    </location>
</feature>
<protein>
    <recommendedName>
        <fullName evidence="1">Transcriptional repressor NrdR</fullName>
    </recommendedName>
</protein>